<keyword id="KW-0687">Ribonucleoprotein</keyword>
<keyword id="KW-0689">Ribosomal protein</keyword>
<keyword id="KW-0694">RNA-binding</keyword>
<keyword id="KW-0699">rRNA-binding</keyword>
<organism>
    <name type="scientific">Chlorobium limicola (strain DSM 245 / NBRC 103803 / 6330)</name>
    <dbReference type="NCBI Taxonomy" id="290315"/>
    <lineage>
        <taxon>Bacteria</taxon>
        <taxon>Pseudomonadati</taxon>
        <taxon>Chlorobiota</taxon>
        <taxon>Chlorobiia</taxon>
        <taxon>Chlorobiales</taxon>
        <taxon>Chlorobiaceae</taxon>
        <taxon>Chlorobium/Pelodictyon group</taxon>
        <taxon>Chlorobium</taxon>
    </lineage>
</organism>
<evidence type="ECO:0000255" key="1">
    <source>
        <dbReference type="HAMAP-Rule" id="MF_01309"/>
    </source>
</evidence>
<evidence type="ECO:0000256" key="2">
    <source>
        <dbReference type="SAM" id="MobiDB-lite"/>
    </source>
</evidence>
<evidence type="ECO:0000305" key="3"/>
<sequence length="251" mass="28604">MGQKVNPTGFRLGIIKDWTSRWYDDSPVISEKIKQDHVIRNYVLARLKREKAGIARIVIERTTKHVKINIYAARPGAVVGRKGEEINNLSQELTRITGKEVKIDVVEVIKPEIEAQLIGDNIAYQLENRVSFRRAMKQAIQQAMRAGAEGIRIRCAGRLGGAEIARAEQYKEGKIPLHTIRANIDYASVTAHTIAGTIGIKVWVYKGEVLVQRIDAIEEDEMKRMKDRRADSKSRPRDPRSKRRRSRTKRA</sequence>
<name>RS3_CHLL2</name>
<dbReference type="EMBL" id="CP001097">
    <property type="protein sequence ID" value="ACD91247.1"/>
    <property type="molecule type" value="Genomic_DNA"/>
</dbReference>
<dbReference type="RefSeq" id="WP_012467114.1">
    <property type="nucleotide sequence ID" value="NC_010803.1"/>
</dbReference>
<dbReference type="SMR" id="B3EGY4"/>
<dbReference type="STRING" id="290315.Clim_2223"/>
<dbReference type="KEGG" id="cli:Clim_2223"/>
<dbReference type="eggNOG" id="COG0092">
    <property type="taxonomic scope" value="Bacteria"/>
</dbReference>
<dbReference type="HOGENOM" id="CLU_058591_0_2_10"/>
<dbReference type="OrthoDB" id="9806396at2"/>
<dbReference type="Proteomes" id="UP000008841">
    <property type="component" value="Chromosome"/>
</dbReference>
<dbReference type="GO" id="GO:0022627">
    <property type="term" value="C:cytosolic small ribosomal subunit"/>
    <property type="evidence" value="ECO:0007669"/>
    <property type="project" value="TreeGrafter"/>
</dbReference>
<dbReference type="GO" id="GO:0003729">
    <property type="term" value="F:mRNA binding"/>
    <property type="evidence" value="ECO:0007669"/>
    <property type="project" value="UniProtKB-UniRule"/>
</dbReference>
<dbReference type="GO" id="GO:0019843">
    <property type="term" value="F:rRNA binding"/>
    <property type="evidence" value="ECO:0007669"/>
    <property type="project" value="UniProtKB-UniRule"/>
</dbReference>
<dbReference type="GO" id="GO:0003735">
    <property type="term" value="F:structural constituent of ribosome"/>
    <property type="evidence" value="ECO:0007669"/>
    <property type="project" value="InterPro"/>
</dbReference>
<dbReference type="GO" id="GO:0006412">
    <property type="term" value="P:translation"/>
    <property type="evidence" value="ECO:0007669"/>
    <property type="project" value="UniProtKB-UniRule"/>
</dbReference>
<dbReference type="CDD" id="cd02412">
    <property type="entry name" value="KH-II_30S_S3"/>
    <property type="match status" value="1"/>
</dbReference>
<dbReference type="FunFam" id="3.30.300.20:FF:000001">
    <property type="entry name" value="30S ribosomal protein S3"/>
    <property type="match status" value="1"/>
</dbReference>
<dbReference type="Gene3D" id="3.30.300.20">
    <property type="match status" value="1"/>
</dbReference>
<dbReference type="Gene3D" id="3.30.1140.32">
    <property type="entry name" value="Ribosomal protein S3, C-terminal domain"/>
    <property type="match status" value="1"/>
</dbReference>
<dbReference type="HAMAP" id="MF_01309_B">
    <property type="entry name" value="Ribosomal_uS3_B"/>
    <property type="match status" value="1"/>
</dbReference>
<dbReference type="InterPro" id="IPR004087">
    <property type="entry name" value="KH_dom"/>
</dbReference>
<dbReference type="InterPro" id="IPR015946">
    <property type="entry name" value="KH_dom-like_a/b"/>
</dbReference>
<dbReference type="InterPro" id="IPR004044">
    <property type="entry name" value="KH_dom_type_2"/>
</dbReference>
<dbReference type="InterPro" id="IPR009019">
    <property type="entry name" value="KH_sf_prok-type"/>
</dbReference>
<dbReference type="InterPro" id="IPR036419">
    <property type="entry name" value="Ribosomal_S3_C_sf"/>
</dbReference>
<dbReference type="InterPro" id="IPR005704">
    <property type="entry name" value="Ribosomal_uS3_bac-typ"/>
</dbReference>
<dbReference type="InterPro" id="IPR001351">
    <property type="entry name" value="Ribosomal_uS3_C"/>
</dbReference>
<dbReference type="InterPro" id="IPR018280">
    <property type="entry name" value="Ribosomal_uS3_CS"/>
</dbReference>
<dbReference type="NCBIfam" id="TIGR01009">
    <property type="entry name" value="rpsC_bact"/>
    <property type="match status" value="1"/>
</dbReference>
<dbReference type="PANTHER" id="PTHR11760">
    <property type="entry name" value="30S/40S RIBOSOMAL PROTEIN S3"/>
    <property type="match status" value="1"/>
</dbReference>
<dbReference type="PANTHER" id="PTHR11760:SF19">
    <property type="entry name" value="SMALL RIBOSOMAL SUBUNIT PROTEIN US3C"/>
    <property type="match status" value="1"/>
</dbReference>
<dbReference type="Pfam" id="PF07650">
    <property type="entry name" value="KH_2"/>
    <property type="match status" value="1"/>
</dbReference>
<dbReference type="Pfam" id="PF00189">
    <property type="entry name" value="Ribosomal_S3_C"/>
    <property type="match status" value="1"/>
</dbReference>
<dbReference type="SMART" id="SM00322">
    <property type="entry name" value="KH"/>
    <property type="match status" value="1"/>
</dbReference>
<dbReference type="SUPFAM" id="SSF54814">
    <property type="entry name" value="Prokaryotic type KH domain (KH-domain type II)"/>
    <property type="match status" value="1"/>
</dbReference>
<dbReference type="SUPFAM" id="SSF54821">
    <property type="entry name" value="Ribosomal protein S3 C-terminal domain"/>
    <property type="match status" value="1"/>
</dbReference>
<dbReference type="PROSITE" id="PS50823">
    <property type="entry name" value="KH_TYPE_2"/>
    <property type="match status" value="1"/>
</dbReference>
<dbReference type="PROSITE" id="PS00548">
    <property type="entry name" value="RIBOSOMAL_S3"/>
    <property type="match status" value="1"/>
</dbReference>
<accession>B3EGY4</accession>
<comment type="function">
    <text evidence="1">Binds the lower part of the 30S subunit head. Binds mRNA in the 70S ribosome, positioning it for translation.</text>
</comment>
<comment type="subunit">
    <text evidence="1">Part of the 30S ribosomal subunit. Forms a tight complex with proteins S10 and S14.</text>
</comment>
<comment type="similarity">
    <text evidence="1">Belongs to the universal ribosomal protein uS3 family.</text>
</comment>
<protein>
    <recommendedName>
        <fullName evidence="1">Small ribosomal subunit protein uS3</fullName>
    </recommendedName>
    <alternativeName>
        <fullName evidence="3">30S ribosomal protein S3</fullName>
    </alternativeName>
</protein>
<reference key="1">
    <citation type="submission" date="2008-05" db="EMBL/GenBank/DDBJ databases">
        <title>Complete sequence of Chlorobium limicola DSM 245.</title>
        <authorList>
            <consortium name="US DOE Joint Genome Institute"/>
            <person name="Lucas S."/>
            <person name="Copeland A."/>
            <person name="Lapidus A."/>
            <person name="Glavina del Rio T."/>
            <person name="Dalin E."/>
            <person name="Tice H."/>
            <person name="Bruce D."/>
            <person name="Goodwin L."/>
            <person name="Pitluck S."/>
            <person name="Schmutz J."/>
            <person name="Larimer F."/>
            <person name="Land M."/>
            <person name="Hauser L."/>
            <person name="Kyrpides N."/>
            <person name="Ovchinnikova G."/>
            <person name="Zhao F."/>
            <person name="Li T."/>
            <person name="Liu Z."/>
            <person name="Overmann J."/>
            <person name="Bryant D.A."/>
            <person name="Richardson P."/>
        </authorList>
    </citation>
    <scope>NUCLEOTIDE SEQUENCE [LARGE SCALE GENOMIC DNA]</scope>
    <source>
        <strain>DSM 245 / NBRC 103803 / 6330</strain>
    </source>
</reference>
<gene>
    <name evidence="1" type="primary">rpsC</name>
    <name type="ordered locus">Clim_2223</name>
</gene>
<proteinExistence type="inferred from homology"/>
<feature type="chain" id="PRO_1000140936" description="Small ribosomal subunit protein uS3">
    <location>
        <begin position="1"/>
        <end position="251"/>
    </location>
</feature>
<feature type="domain" description="KH type-2" evidence="1">
    <location>
        <begin position="39"/>
        <end position="109"/>
    </location>
</feature>
<feature type="region of interest" description="Disordered" evidence="2">
    <location>
        <begin position="221"/>
        <end position="251"/>
    </location>
</feature>
<feature type="compositionally biased region" description="Basic and acidic residues" evidence="2">
    <location>
        <begin position="221"/>
        <end position="239"/>
    </location>
</feature>
<feature type="compositionally biased region" description="Basic residues" evidence="2">
    <location>
        <begin position="240"/>
        <end position="251"/>
    </location>
</feature>